<dbReference type="EC" id="6.2.1.5" evidence="1"/>
<dbReference type="EMBL" id="CP000301">
    <property type="protein sequence ID" value="ABD85768.1"/>
    <property type="molecule type" value="Genomic_DNA"/>
</dbReference>
<dbReference type="SMR" id="Q21CW8"/>
<dbReference type="STRING" id="316056.RPC_0193"/>
<dbReference type="KEGG" id="rpc:RPC_0193"/>
<dbReference type="eggNOG" id="COG0045">
    <property type="taxonomic scope" value="Bacteria"/>
</dbReference>
<dbReference type="HOGENOM" id="CLU_037430_0_2_5"/>
<dbReference type="OrthoDB" id="9802602at2"/>
<dbReference type="UniPathway" id="UPA00223">
    <property type="reaction ID" value="UER00999"/>
</dbReference>
<dbReference type="GO" id="GO:0005829">
    <property type="term" value="C:cytosol"/>
    <property type="evidence" value="ECO:0007669"/>
    <property type="project" value="TreeGrafter"/>
</dbReference>
<dbReference type="GO" id="GO:0042709">
    <property type="term" value="C:succinate-CoA ligase complex"/>
    <property type="evidence" value="ECO:0007669"/>
    <property type="project" value="TreeGrafter"/>
</dbReference>
<dbReference type="GO" id="GO:0005524">
    <property type="term" value="F:ATP binding"/>
    <property type="evidence" value="ECO:0007669"/>
    <property type="project" value="UniProtKB-UniRule"/>
</dbReference>
<dbReference type="GO" id="GO:0000287">
    <property type="term" value="F:magnesium ion binding"/>
    <property type="evidence" value="ECO:0007669"/>
    <property type="project" value="UniProtKB-UniRule"/>
</dbReference>
<dbReference type="GO" id="GO:0004775">
    <property type="term" value="F:succinate-CoA ligase (ADP-forming) activity"/>
    <property type="evidence" value="ECO:0007669"/>
    <property type="project" value="UniProtKB-UniRule"/>
</dbReference>
<dbReference type="GO" id="GO:0004776">
    <property type="term" value="F:succinate-CoA ligase (GDP-forming) activity"/>
    <property type="evidence" value="ECO:0007669"/>
    <property type="project" value="RHEA"/>
</dbReference>
<dbReference type="GO" id="GO:0006104">
    <property type="term" value="P:succinyl-CoA metabolic process"/>
    <property type="evidence" value="ECO:0007669"/>
    <property type="project" value="TreeGrafter"/>
</dbReference>
<dbReference type="GO" id="GO:0006099">
    <property type="term" value="P:tricarboxylic acid cycle"/>
    <property type="evidence" value="ECO:0007669"/>
    <property type="project" value="UniProtKB-UniRule"/>
</dbReference>
<dbReference type="FunFam" id="3.30.1490.20:FF:000002">
    <property type="entry name" value="Succinate--CoA ligase [ADP-forming] subunit beta"/>
    <property type="match status" value="1"/>
</dbReference>
<dbReference type="FunFam" id="3.30.470.20:FF:000002">
    <property type="entry name" value="Succinate--CoA ligase [ADP-forming] subunit beta"/>
    <property type="match status" value="1"/>
</dbReference>
<dbReference type="FunFam" id="3.40.50.261:FF:000001">
    <property type="entry name" value="Succinate--CoA ligase [ADP-forming] subunit beta"/>
    <property type="match status" value="1"/>
</dbReference>
<dbReference type="Gene3D" id="3.30.1490.20">
    <property type="entry name" value="ATP-grasp fold, A domain"/>
    <property type="match status" value="1"/>
</dbReference>
<dbReference type="Gene3D" id="3.30.470.20">
    <property type="entry name" value="ATP-grasp fold, B domain"/>
    <property type="match status" value="1"/>
</dbReference>
<dbReference type="Gene3D" id="3.40.50.261">
    <property type="entry name" value="Succinyl-CoA synthetase domains"/>
    <property type="match status" value="1"/>
</dbReference>
<dbReference type="HAMAP" id="MF_00558">
    <property type="entry name" value="Succ_CoA_beta"/>
    <property type="match status" value="1"/>
</dbReference>
<dbReference type="InterPro" id="IPR013650">
    <property type="entry name" value="ATP-grasp_succ-CoA_synth-type"/>
</dbReference>
<dbReference type="InterPro" id="IPR013815">
    <property type="entry name" value="ATP_grasp_subdomain_1"/>
</dbReference>
<dbReference type="InterPro" id="IPR005811">
    <property type="entry name" value="SUCC_ACL_C"/>
</dbReference>
<dbReference type="InterPro" id="IPR005809">
    <property type="entry name" value="Succ_CoA_ligase-like_bsu"/>
</dbReference>
<dbReference type="InterPro" id="IPR016102">
    <property type="entry name" value="Succinyl-CoA_synth-like"/>
</dbReference>
<dbReference type="NCBIfam" id="NF001913">
    <property type="entry name" value="PRK00696.1"/>
    <property type="match status" value="1"/>
</dbReference>
<dbReference type="NCBIfam" id="TIGR01016">
    <property type="entry name" value="sucCoAbeta"/>
    <property type="match status" value="1"/>
</dbReference>
<dbReference type="PANTHER" id="PTHR11815:SF10">
    <property type="entry name" value="SUCCINATE--COA LIGASE [GDP-FORMING] SUBUNIT BETA, MITOCHONDRIAL"/>
    <property type="match status" value="1"/>
</dbReference>
<dbReference type="PANTHER" id="PTHR11815">
    <property type="entry name" value="SUCCINYL-COA SYNTHETASE BETA CHAIN"/>
    <property type="match status" value="1"/>
</dbReference>
<dbReference type="Pfam" id="PF08442">
    <property type="entry name" value="ATP-grasp_2"/>
    <property type="match status" value="1"/>
</dbReference>
<dbReference type="Pfam" id="PF00549">
    <property type="entry name" value="Ligase_CoA"/>
    <property type="match status" value="1"/>
</dbReference>
<dbReference type="PIRSF" id="PIRSF001554">
    <property type="entry name" value="SucCS_beta"/>
    <property type="match status" value="1"/>
</dbReference>
<dbReference type="SUPFAM" id="SSF56059">
    <property type="entry name" value="Glutathione synthetase ATP-binding domain-like"/>
    <property type="match status" value="1"/>
</dbReference>
<dbReference type="SUPFAM" id="SSF52210">
    <property type="entry name" value="Succinyl-CoA synthetase domains"/>
    <property type="match status" value="1"/>
</dbReference>
<evidence type="ECO:0000255" key="1">
    <source>
        <dbReference type="HAMAP-Rule" id="MF_00558"/>
    </source>
</evidence>
<accession>Q21CW8</accession>
<organism>
    <name type="scientific">Rhodopseudomonas palustris (strain BisB18)</name>
    <dbReference type="NCBI Taxonomy" id="316056"/>
    <lineage>
        <taxon>Bacteria</taxon>
        <taxon>Pseudomonadati</taxon>
        <taxon>Pseudomonadota</taxon>
        <taxon>Alphaproteobacteria</taxon>
        <taxon>Hyphomicrobiales</taxon>
        <taxon>Nitrobacteraceae</taxon>
        <taxon>Rhodopseudomonas</taxon>
    </lineage>
</organism>
<proteinExistence type="inferred from homology"/>
<feature type="chain" id="PRO_1000082192" description="Succinate--CoA ligase [ADP-forming] subunit beta">
    <location>
        <begin position="1"/>
        <end position="399"/>
    </location>
</feature>
<feature type="domain" description="ATP-grasp" evidence="1">
    <location>
        <begin position="9"/>
        <end position="254"/>
    </location>
</feature>
<feature type="binding site" evidence="1">
    <location>
        <position position="46"/>
    </location>
    <ligand>
        <name>ATP</name>
        <dbReference type="ChEBI" id="CHEBI:30616"/>
    </ligand>
</feature>
<feature type="binding site" evidence="1">
    <location>
        <begin position="53"/>
        <end position="55"/>
    </location>
    <ligand>
        <name>ATP</name>
        <dbReference type="ChEBI" id="CHEBI:30616"/>
    </ligand>
</feature>
<feature type="binding site" evidence="1">
    <location>
        <position position="109"/>
    </location>
    <ligand>
        <name>ATP</name>
        <dbReference type="ChEBI" id="CHEBI:30616"/>
    </ligand>
</feature>
<feature type="binding site" evidence="1">
    <location>
        <position position="112"/>
    </location>
    <ligand>
        <name>ATP</name>
        <dbReference type="ChEBI" id="CHEBI:30616"/>
    </ligand>
</feature>
<feature type="binding site" evidence="1">
    <location>
        <position position="117"/>
    </location>
    <ligand>
        <name>ATP</name>
        <dbReference type="ChEBI" id="CHEBI:30616"/>
    </ligand>
</feature>
<feature type="binding site" evidence="1">
    <location>
        <position position="209"/>
    </location>
    <ligand>
        <name>Mg(2+)</name>
        <dbReference type="ChEBI" id="CHEBI:18420"/>
    </ligand>
</feature>
<feature type="binding site" evidence="1">
    <location>
        <position position="223"/>
    </location>
    <ligand>
        <name>Mg(2+)</name>
        <dbReference type="ChEBI" id="CHEBI:18420"/>
    </ligand>
</feature>
<feature type="binding site" evidence="1">
    <location>
        <position position="274"/>
    </location>
    <ligand>
        <name>substrate</name>
        <note>ligand shared with subunit alpha</note>
    </ligand>
</feature>
<feature type="binding site" evidence="1">
    <location>
        <begin position="331"/>
        <end position="333"/>
    </location>
    <ligand>
        <name>substrate</name>
        <note>ligand shared with subunit alpha</note>
    </ligand>
</feature>
<protein>
    <recommendedName>
        <fullName evidence="1">Succinate--CoA ligase [ADP-forming] subunit beta</fullName>
        <ecNumber evidence="1">6.2.1.5</ecNumber>
    </recommendedName>
    <alternativeName>
        <fullName evidence="1">Succinyl-CoA synthetase subunit beta</fullName>
        <shortName evidence="1">SCS-beta</shortName>
    </alternativeName>
</protein>
<keyword id="KW-0067">ATP-binding</keyword>
<keyword id="KW-0436">Ligase</keyword>
<keyword id="KW-0460">Magnesium</keyword>
<keyword id="KW-0479">Metal-binding</keyword>
<keyword id="KW-0547">Nucleotide-binding</keyword>
<keyword id="KW-0816">Tricarboxylic acid cycle</keyword>
<reference key="1">
    <citation type="submission" date="2006-03" db="EMBL/GenBank/DDBJ databases">
        <title>Complete sequence of Rhodopseudomonas palustris BisB18.</title>
        <authorList>
            <consortium name="US DOE Joint Genome Institute"/>
            <person name="Copeland A."/>
            <person name="Lucas S."/>
            <person name="Lapidus A."/>
            <person name="Barry K."/>
            <person name="Detter J.C."/>
            <person name="Glavina del Rio T."/>
            <person name="Hammon N."/>
            <person name="Israni S."/>
            <person name="Dalin E."/>
            <person name="Tice H."/>
            <person name="Pitluck S."/>
            <person name="Chain P."/>
            <person name="Malfatti S."/>
            <person name="Shin M."/>
            <person name="Vergez L."/>
            <person name="Schmutz J."/>
            <person name="Larimer F."/>
            <person name="Land M."/>
            <person name="Hauser L."/>
            <person name="Pelletier D.A."/>
            <person name="Kyrpides N."/>
            <person name="Anderson I."/>
            <person name="Oda Y."/>
            <person name="Harwood C.S."/>
            <person name="Richardson P."/>
        </authorList>
    </citation>
    <scope>NUCLEOTIDE SEQUENCE [LARGE SCALE GENOMIC DNA]</scope>
    <source>
        <strain>BisB18</strain>
    </source>
</reference>
<name>SUCC_RHOPB</name>
<comment type="function">
    <text evidence="1">Succinyl-CoA synthetase functions in the citric acid cycle (TCA), coupling the hydrolysis of succinyl-CoA to the synthesis of either ATP or GTP and thus represents the only step of substrate-level phosphorylation in the TCA. The beta subunit provides nucleotide specificity of the enzyme and binds the substrate succinate, while the binding sites for coenzyme A and phosphate are found in the alpha subunit.</text>
</comment>
<comment type="catalytic activity">
    <reaction evidence="1">
        <text>succinate + ATP + CoA = succinyl-CoA + ADP + phosphate</text>
        <dbReference type="Rhea" id="RHEA:17661"/>
        <dbReference type="ChEBI" id="CHEBI:30031"/>
        <dbReference type="ChEBI" id="CHEBI:30616"/>
        <dbReference type="ChEBI" id="CHEBI:43474"/>
        <dbReference type="ChEBI" id="CHEBI:57287"/>
        <dbReference type="ChEBI" id="CHEBI:57292"/>
        <dbReference type="ChEBI" id="CHEBI:456216"/>
        <dbReference type="EC" id="6.2.1.5"/>
    </reaction>
    <physiologicalReaction direction="right-to-left" evidence="1">
        <dbReference type="Rhea" id="RHEA:17663"/>
    </physiologicalReaction>
</comment>
<comment type="catalytic activity">
    <reaction evidence="1">
        <text>GTP + succinate + CoA = succinyl-CoA + GDP + phosphate</text>
        <dbReference type="Rhea" id="RHEA:22120"/>
        <dbReference type="ChEBI" id="CHEBI:30031"/>
        <dbReference type="ChEBI" id="CHEBI:37565"/>
        <dbReference type="ChEBI" id="CHEBI:43474"/>
        <dbReference type="ChEBI" id="CHEBI:57287"/>
        <dbReference type="ChEBI" id="CHEBI:57292"/>
        <dbReference type="ChEBI" id="CHEBI:58189"/>
    </reaction>
    <physiologicalReaction direction="right-to-left" evidence="1">
        <dbReference type="Rhea" id="RHEA:22122"/>
    </physiologicalReaction>
</comment>
<comment type="cofactor">
    <cofactor evidence="1">
        <name>Mg(2+)</name>
        <dbReference type="ChEBI" id="CHEBI:18420"/>
    </cofactor>
    <text evidence="1">Binds 1 Mg(2+) ion per subunit.</text>
</comment>
<comment type="pathway">
    <text evidence="1">Carbohydrate metabolism; tricarboxylic acid cycle; succinate from succinyl-CoA (ligase route): step 1/1.</text>
</comment>
<comment type="subunit">
    <text evidence="1">Heterotetramer of two alpha and two beta subunits.</text>
</comment>
<comment type="similarity">
    <text evidence="1">Belongs to the succinate/malate CoA ligase beta subunit family.</text>
</comment>
<sequence>MNIHEYQAKAVLQPFGVSLSKGVAILKATDAEAAAKQLGGPIWVVKSQIHAGGRGKGKFKEASAGDKGGVRLAKSIEEVKQYAAEMLGATLVTIQTGPAGKQVNRLYIEDGSDIEKEFYLSLLVDRVTSRISFVVSTEGGMNIEDVAHDTPEKIISFSVDPATGIMGHHGRTVAKALGLTGDLAKQAERLVAQLYAAFISKDMEMLEINPLVVTKQGELKCLDAKMSFDGNALYRHPDISALRDETEEDAKEIEASKYDLNYVTLDGTIGCMVNGAGLAMATMDIIKLYGMTPANFLDVGGGANKEKVTAAFKIITADPNVKGILINIFGGIMKCDIIAEGVVAAVKDVGLKVPLVVRLEGTNVEAGKKIIQESGLNVLSADDLDDAAQKIVKAVKEAA</sequence>
<gene>
    <name evidence="1" type="primary">sucC</name>
    <name type="ordered locus">RPC_0193</name>
</gene>